<organism>
    <name type="scientific">Xanthomonas campestris pv. campestris (strain ATCC 33913 / DSM 3586 / NCPPB 528 / LMG 568 / P 25)</name>
    <dbReference type="NCBI Taxonomy" id="190485"/>
    <lineage>
        <taxon>Bacteria</taxon>
        <taxon>Pseudomonadati</taxon>
        <taxon>Pseudomonadota</taxon>
        <taxon>Gammaproteobacteria</taxon>
        <taxon>Lysobacterales</taxon>
        <taxon>Lysobacteraceae</taxon>
        <taxon>Xanthomonas</taxon>
    </lineage>
</organism>
<protein>
    <recommendedName>
        <fullName evidence="1">Error-prone DNA polymerase</fullName>
        <ecNumber evidence="1">2.7.7.7</ecNumber>
    </recommendedName>
</protein>
<accession>Q8PBL8</accession>
<dbReference type="EC" id="2.7.7.7" evidence="1"/>
<dbReference type="EMBL" id="AE008922">
    <property type="protein sequence ID" value="AAM40400.1"/>
    <property type="status" value="ALT_INIT"/>
    <property type="molecule type" value="Genomic_DNA"/>
</dbReference>
<dbReference type="RefSeq" id="NP_636476.1">
    <property type="nucleotide sequence ID" value="NC_003902.1"/>
</dbReference>
<dbReference type="RefSeq" id="WP_019237880.1">
    <property type="nucleotide sequence ID" value="NC_003902.1"/>
</dbReference>
<dbReference type="SMR" id="Q8PBL8"/>
<dbReference type="STRING" id="190485.XCC1101"/>
<dbReference type="EnsemblBacteria" id="AAM40400">
    <property type="protein sequence ID" value="AAM40400"/>
    <property type="gene ID" value="XCC1101"/>
</dbReference>
<dbReference type="KEGG" id="xcc:XCC1101"/>
<dbReference type="PATRIC" id="fig|190485.4.peg.1174"/>
<dbReference type="eggNOG" id="COG0587">
    <property type="taxonomic scope" value="Bacteria"/>
</dbReference>
<dbReference type="HOGENOM" id="CLU_001600_4_0_6"/>
<dbReference type="OrthoDB" id="9803237at2"/>
<dbReference type="Proteomes" id="UP000001010">
    <property type="component" value="Chromosome"/>
</dbReference>
<dbReference type="GO" id="GO:0005737">
    <property type="term" value="C:cytoplasm"/>
    <property type="evidence" value="ECO:0007669"/>
    <property type="project" value="UniProtKB-SubCell"/>
</dbReference>
<dbReference type="GO" id="GO:0008408">
    <property type="term" value="F:3'-5' exonuclease activity"/>
    <property type="evidence" value="ECO:0007669"/>
    <property type="project" value="InterPro"/>
</dbReference>
<dbReference type="GO" id="GO:0003887">
    <property type="term" value="F:DNA-directed DNA polymerase activity"/>
    <property type="evidence" value="ECO:0000318"/>
    <property type="project" value="GO_Central"/>
</dbReference>
<dbReference type="GO" id="GO:0003676">
    <property type="term" value="F:nucleic acid binding"/>
    <property type="evidence" value="ECO:0007669"/>
    <property type="project" value="InterPro"/>
</dbReference>
<dbReference type="GO" id="GO:0006281">
    <property type="term" value="P:DNA repair"/>
    <property type="evidence" value="ECO:0007669"/>
    <property type="project" value="UniProtKB-UniRule"/>
</dbReference>
<dbReference type="GO" id="GO:0006260">
    <property type="term" value="P:DNA replication"/>
    <property type="evidence" value="ECO:0007669"/>
    <property type="project" value="UniProtKB-KW"/>
</dbReference>
<dbReference type="CDD" id="cd04485">
    <property type="entry name" value="DnaE_OBF"/>
    <property type="match status" value="1"/>
</dbReference>
<dbReference type="CDD" id="cd07434">
    <property type="entry name" value="PHP_PolIIIA_DnaE2"/>
    <property type="match status" value="1"/>
</dbReference>
<dbReference type="Gene3D" id="1.10.150.870">
    <property type="match status" value="1"/>
</dbReference>
<dbReference type="Gene3D" id="3.20.20.140">
    <property type="entry name" value="Metal-dependent hydrolases"/>
    <property type="match status" value="1"/>
</dbReference>
<dbReference type="HAMAP" id="MF_01902">
    <property type="entry name" value="DNApol_error_prone"/>
    <property type="match status" value="1"/>
</dbReference>
<dbReference type="InterPro" id="IPR011708">
    <property type="entry name" value="DNA_pol3_alpha_NTPase_dom"/>
</dbReference>
<dbReference type="InterPro" id="IPR040982">
    <property type="entry name" value="DNA_pol3_finger"/>
</dbReference>
<dbReference type="InterPro" id="IPR023073">
    <property type="entry name" value="DnaE2"/>
</dbReference>
<dbReference type="InterPro" id="IPR004805">
    <property type="entry name" value="DnaE2/DnaE/PolC"/>
</dbReference>
<dbReference type="InterPro" id="IPR029460">
    <property type="entry name" value="DNAPol_HHH"/>
</dbReference>
<dbReference type="InterPro" id="IPR004365">
    <property type="entry name" value="NA-bd_OB_tRNA"/>
</dbReference>
<dbReference type="InterPro" id="IPR004013">
    <property type="entry name" value="PHP_dom"/>
</dbReference>
<dbReference type="InterPro" id="IPR003141">
    <property type="entry name" value="Pol/His_phosphatase_N"/>
</dbReference>
<dbReference type="InterPro" id="IPR016195">
    <property type="entry name" value="Pol/histidinol_Pase-like"/>
</dbReference>
<dbReference type="NCBIfam" id="TIGR00594">
    <property type="entry name" value="polc"/>
    <property type="match status" value="1"/>
</dbReference>
<dbReference type="NCBIfam" id="NF004225">
    <property type="entry name" value="PRK05672.1"/>
    <property type="match status" value="1"/>
</dbReference>
<dbReference type="PANTHER" id="PTHR32294">
    <property type="entry name" value="DNA POLYMERASE III SUBUNIT ALPHA"/>
    <property type="match status" value="1"/>
</dbReference>
<dbReference type="PANTHER" id="PTHR32294:SF4">
    <property type="entry name" value="ERROR-PRONE DNA POLYMERASE"/>
    <property type="match status" value="1"/>
</dbReference>
<dbReference type="Pfam" id="PF07733">
    <property type="entry name" value="DNA_pol3_alpha"/>
    <property type="match status" value="1"/>
</dbReference>
<dbReference type="Pfam" id="PF17657">
    <property type="entry name" value="DNA_pol3_finger"/>
    <property type="match status" value="1"/>
</dbReference>
<dbReference type="Pfam" id="PF14579">
    <property type="entry name" value="HHH_6"/>
    <property type="match status" value="1"/>
</dbReference>
<dbReference type="Pfam" id="PF02811">
    <property type="entry name" value="PHP"/>
    <property type="match status" value="1"/>
</dbReference>
<dbReference type="Pfam" id="PF01336">
    <property type="entry name" value="tRNA_anti-codon"/>
    <property type="match status" value="1"/>
</dbReference>
<dbReference type="SMART" id="SM00481">
    <property type="entry name" value="POLIIIAc"/>
    <property type="match status" value="1"/>
</dbReference>
<dbReference type="SUPFAM" id="SSF89550">
    <property type="entry name" value="PHP domain-like"/>
    <property type="match status" value="1"/>
</dbReference>
<keyword id="KW-0963">Cytoplasm</keyword>
<keyword id="KW-0227">DNA damage</keyword>
<keyword id="KW-0234">DNA repair</keyword>
<keyword id="KW-0235">DNA replication</keyword>
<keyword id="KW-0239">DNA-directed DNA polymerase</keyword>
<keyword id="KW-0548">Nucleotidyltransferase</keyword>
<keyword id="KW-1185">Reference proteome</keyword>
<keyword id="KW-0808">Transferase</keyword>
<proteinExistence type="inferred from homology"/>
<comment type="function">
    <text evidence="1">DNA polymerase involved in damage-induced mutagenesis and translesion synthesis (TLS). It is not the major replicative DNA polymerase.</text>
</comment>
<comment type="catalytic activity">
    <reaction evidence="1">
        <text>DNA(n) + a 2'-deoxyribonucleoside 5'-triphosphate = DNA(n+1) + diphosphate</text>
        <dbReference type="Rhea" id="RHEA:22508"/>
        <dbReference type="Rhea" id="RHEA-COMP:17339"/>
        <dbReference type="Rhea" id="RHEA-COMP:17340"/>
        <dbReference type="ChEBI" id="CHEBI:33019"/>
        <dbReference type="ChEBI" id="CHEBI:61560"/>
        <dbReference type="ChEBI" id="CHEBI:173112"/>
        <dbReference type="EC" id="2.7.7.7"/>
    </reaction>
</comment>
<comment type="subcellular location">
    <subcellularLocation>
        <location evidence="1">Cytoplasm</location>
    </subcellularLocation>
</comment>
<comment type="similarity">
    <text evidence="1">Belongs to the DNA polymerase type-C family. DnaE2 subfamily.</text>
</comment>
<comment type="sequence caution" evidence="2">
    <conflict type="erroneous initiation">
        <sequence resource="EMBL-CDS" id="AAM40400"/>
    </conflict>
</comment>
<evidence type="ECO:0000255" key="1">
    <source>
        <dbReference type="HAMAP-Rule" id="MF_01902"/>
    </source>
</evidence>
<evidence type="ECO:0000305" key="2"/>
<feature type="chain" id="PRO_0000103405" description="Error-prone DNA polymerase">
    <location>
        <begin position="1"/>
        <end position="1082"/>
    </location>
</feature>
<reference key="1">
    <citation type="journal article" date="2002" name="Nature">
        <title>Comparison of the genomes of two Xanthomonas pathogens with differing host specificities.</title>
        <authorList>
            <person name="da Silva A.C.R."/>
            <person name="Ferro J.A."/>
            <person name="Reinach F.C."/>
            <person name="Farah C.S."/>
            <person name="Furlan L.R."/>
            <person name="Quaggio R.B."/>
            <person name="Monteiro-Vitorello C.B."/>
            <person name="Van Sluys M.A."/>
            <person name="Almeida N.F. Jr."/>
            <person name="Alves L.M.C."/>
            <person name="do Amaral A.M."/>
            <person name="Bertolini M.C."/>
            <person name="Camargo L.E.A."/>
            <person name="Camarotte G."/>
            <person name="Cannavan F."/>
            <person name="Cardozo J."/>
            <person name="Chambergo F."/>
            <person name="Ciapina L.P."/>
            <person name="Cicarelli R.M.B."/>
            <person name="Coutinho L.L."/>
            <person name="Cursino-Santos J.R."/>
            <person name="El-Dorry H."/>
            <person name="Faria J.B."/>
            <person name="Ferreira A.J.S."/>
            <person name="Ferreira R.C.C."/>
            <person name="Ferro M.I.T."/>
            <person name="Formighieri E.F."/>
            <person name="Franco M.C."/>
            <person name="Greggio C.C."/>
            <person name="Gruber A."/>
            <person name="Katsuyama A.M."/>
            <person name="Kishi L.T."/>
            <person name="Leite R.P."/>
            <person name="Lemos E.G.M."/>
            <person name="Lemos M.V.F."/>
            <person name="Locali E.C."/>
            <person name="Machado M.A."/>
            <person name="Madeira A.M.B.N."/>
            <person name="Martinez-Rossi N.M."/>
            <person name="Martins E.C."/>
            <person name="Meidanis J."/>
            <person name="Menck C.F.M."/>
            <person name="Miyaki C.Y."/>
            <person name="Moon D.H."/>
            <person name="Moreira L.M."/>
            <person name="Novo M.T.M."/>
            <person name="Okura V.K."/>
            <person name="Oliveira M.C."/>
            <person name="Oliveira V.R."/>
            <person name="Pereira H.A."/>
            <person name="Rossi A."/>
            <person name="Sena J.A.D."/>
            <person name="Silva C."/>
            <person name="de Souza R.F."/>
            <person name="Spinola L.A.F."/>
            <person name="Takita M.A."/>
            <person name="Tamura R.E."/>
            <person name="Teixeira E.C."/>
            <person name="Tezza R.I.D."/>
            <person name="Trindade dos Santos M."/>
            <person name="Truffi D."/>
            <person name="Tsai S.M."/>
            <person name="White F.F."/>
            <person name="Setubal J.C."/>
            <person name="Kitajima J.P."/>
        </authorList>
    </citation>
    <scope>NUCLEOTIDE SEQUENCE [LARGE SCALE GENOMIC DNA]</scope>
    <source>
        <strain>ATCC 33913 / DSM 3586 / NCPPB 528 / LMG 568 / P 25</strain>
    </source>
</reference>
<sequence length="1082" mass="120079">MSWDDAIDGVDRDTPGGRMPRGWTVAARLRAANDDITHAAVADTLPAYAELHCLSDFSFLRGASSAEQLFARAHHCGYSALAITDECSLAGIVRGLEASRATGVQLIVGSEFTLVDGTRFVLLVENAHGYPQLCSVITTGRRAAGKGAYRLGRAEVEAHFRDVVPGVFALWLPGDQPQAEQGAWLQRVFAERAFLAVELHREQDDAARLQALQALAQQLGMSALASGDVQMAQRRDRIVQDTLTAIRHTLPLADCGAHLFRNGERHLRPRRALGNIYPHALLQASVELAQRCTFDLSKVQYTYPRELVPQGHTPASYLRQLTEAGMRERWPEGAPAQVVAQIDSELELIAYKGYEAFFLTVQDVVRFARAQGILCQGRGSSANSAVCYALGITAVNPSETRLLMARFLSKERDEPPDIDVDFEHERREEVLQYVYTKYGRERAALAATVICYRGKSAVRDVAKAFGLPPDQIALLANCYGWGNGDTPMEQRIAEAGFDLANPLINKILAVTEHLRDHPRHLSQHVGGFVISDEPLSMLVPVENAAMADRTIIQWDKDDLETMKLLKVDCLALGMLTCIRKTLDLVRGHRGRDYTIATLPGEDAATYKMIQRADTVGVFQIESRAQMAMLPRLKPREFYDLVIEVAIVRPGPIQGDMVHPYLRRRQGYEPVSFPSPGVEEILGRTLGIPLFQEQVMELVIHAGYTDSEADQLRRSMAAWRRGGDMEPHRVRIRELMAGRGYAPEFIDQIFEQIKGFGSYGFPQSHAASFAKLVYASCWLKRHEPAAFACGLLNAQPMGFYSASQIVQDARRGSPERQRVEVLPVDVLHSDWDNILVGGRPWHSDADPGEQPAIRLGLRQVSGLSEKVVERIVAARAQRPFADIGDLCLRAALDEKARLALAEAGALQSMVGNRNAARWAMAGVEARRPLLPGSPAERAVELPAPRAGEEILADYRAVGLSLRQHPMALLRPQMLQRRILGLRELQARRHGSGVHVAGLVTQRQRPATAKGTIFVTLEDEHGMINVIVWSHLAMRRRRALLESRLLAVRGRWERVDGVEHLIAGDLYDLSDLLGEMQLPSRDFH</sequence>
<gene>
    <name evidence="1" type="primary">dnaE2</name>
    <name type="ordered locus">XCC1101</name>
</gene>
<name>DNAE2_XANCP</name>